<name>EFR3_KLULA</name>
<comment type="similarity">
    <text evidence="1">Belongs to the EFR3 family.</text>
</comment>
<organism>
    <name type="scientific">Kluyveromyces lactis (strain ATCC 8585 / CBS 2359 / DSM 70799 / NBRC 1267 / NRRL Y-1140 / WM37)</name>
    <name type="common">Yeast</name>
    <name type="synonym">Candida sphaerica</name>
    <dbReference type="NCBI Taxonomy" id="284590"/>
    <lineage>
        <taxon>Eukaryota</taxon>
        <taxon>Fungi</taxon>
        <taxon>Dikarya</taxon>
        <taxon>Ascomycota</taxon>
        <taxon>Saccharomycotina</taxon>
        <taxon>Saccharomycetes</taxon>
        <taxon>Saccharomycetales</taxon>
        <taxon>Saccharomycetaceae</taxon>
        <taxon>Kluyveromyces</taxon>
    </lineage>
</organism>
<sequence>MGFLFTPKHQKLVNQCYPPGRTPDKKPKGSETSYLLYYVNSRRPKLEKVSSYLVKRSTTDLNRRRSGNVSVTLELLAKIVENCNENMNIFIKDFIHIMTLVLNNNNFNNDPTIVGLIERVLEAICNHLDGSLVSGDSEFLELFKNFVTLYFKVANTKLNDTDLVLKGCLDFSKISNLGSIHQWSATAKNCVSIALTKFQERHPIYSEATIDSSFSEPGSPALKKKLTRTQTKVMGLDDVSNTGDYSILALNTFFNTTETDKLTIGLHALIEHLLETPNKELLQFICNGIPVQLRYIVILLFVRPLGTSSEKNMLLILKLISSLLTSAVSIIGLSVIDILRRLITVQLAKSDSTTVVKQIAVTIKDLNRKTYYKQQSSDMFAELSFKFIESGKPHHLELFQLDLDSLISVTSDQCLDLDLFGEFLPYVTDKTQLSKLLYPEAPHQVIFIRFFEKVSTLSKQDTEIAISTSFAYYKAASLLSGLAYYVNNNRPSDGYYAYHHHASKFLGLADYQTQVEFKRKDNDIFTKEDLLNYYSDAGSNIYSEKGRDILLVDHSDQNGTDIDQDTVRYSTPIPLPQISIPPTTTNGIGIKKSSPANDTYVTRSLKHNPVPNVKDLKNLVSSKKDKSNTKTLRGSQSVKSKVTNITFLLDELKNDGDEIKIADPDEEDIIGMEKQDLARSYSLRMNTISSTNSRTLIPSVENAEEHGDDFRDAHEDIEVSSSTRGRLFMV</sequence>
<dbReference type="EMBL" id="CR382123">
    <property type="protein sequence ID" value="CAH01376.1"/>
    <property type="molecule type" value="Genomic_DNA"/>
</dbReference>
<dbReference type="RefSeq" id="XP_452525.1">
    <property type="nucleotide sequence ID" value="XM_452525.1"/>
</dbReference>
<dbReference type="SMR" id="Q6CU64"/>
<dbReference type="FunCoup" id="Q6CU64">
    <property type="interactions" value="77"/>
</dbReference>
<dbReference type="STRING" id="284590.Q6CU64"/>
<dbReference type="PaxDb" id="284590-Q6CU64"/>
<dbReference type="KEGG" id="kla:KLLA0_C07326g"/>
<dbReference type="eggNOG" id="KOG1877">
    <property type="taxonomic scope" value="Eukaryota"/>
</dbReference>
<dbReference type="HOGENOM" id="CLU_371806_0_0_1"/>
<dbReference type="InParanoid" id="Q6CU64"/>
<dbReference type="OMA" id="LYYVNSR"/>
<dbReference type="Proteomes" id="UP000000598">
    <property type="component" value="Chromosome C"/>
</dbReference>
<dbReference type="GO" id="GO:0005886">
    <property type="term" value="C:plasma membrane"/>
    <property type="evidence" value="ECO:0007669"/>
    <property type="project" value="TreeGrafter"/>
</dbReference>
<dbReference type="GO" id="GO:0072659">
    <property type="term" value="P:protein localization to plasma membrane"/>
    <property type="evidence" value="ECO:0007669"/>
    <property type="project" value="InterPro"/>
</dbReference>
<dbReference type="InterPro" id="IPR039786">
    <property type="entry name" value="EFR3"/>
</dbReference>
<dbReference type="InterPro" id="IPR049150">
    <property type="entry name" value="EFR3_HEAT-like_rpt"/>
</dbReference>
<dbReference type="PANTHER" id="PTHR47766">
    <property type="entry name" value="PROTEIN EFR3"/>
    <property type="match status" value="1"/>
</dbReference>
<dbReference type="PANTHER" id="PTHR47766:SF1">
    <property type="entry name" value="PROTEIN EFR3"/>
    <property type="match status" value="1"/>
</dbReference>
<dbReference type="Pfam" id="PF21072">
    <property type="entry name" value="EFR3"/>
    <property type="match status" value="1"/>
</dbReference>
<accession>Q6CU64</accession>
<feature type="chain" id="PRO_0000270780" description="Protein EFR3">
    <location>
        <begin position="1"/>
        <end position="730"/>
    </location>
</feature>
<reference key="1">
    <citation type="journal article" date="2004" name="Nature">
        <title>Genome evolution in yeasts.</title>
        <authorList>
            <person name="Dujon B."/>
            <person name="Sherman D."/>
            <person name="Fischer G."/>
            <person name="Durrens P."/>
            <person name="Casaregola S."/>
            <person name="Lafontaine I."/>
            <person name="de Montigny J."/>
            <person name="Marck C."/>
            <person name="Neuveglise C."/>
            <person name="Talla E."/>
            <person name="Goffard N."/>
            <person name="Frangeul L."/>
            <person name="Aigle M."/>
            <person name="Anthouard V."/>
            <person name="Babour A."/>
            <person name="Barbe V."/>
            <person name="Barnay S."/>
            <person name="Blanchin S."/>
            <person name="Beckerich J.-M."/>
            <person name="Beyne E."/>
            <person name="Bleykasten C."/>
            <person name="Boisrame A."/>
            <person name="Boyer J."/>
            <person name="Cattolico L."/>
            <person name="Confanioleri F."/>
            <person name="de Daruvar A."/>
            <person name="Despons L."/>
            <person name="Fabre E."/>
            <person name="Fairhead C."/>
            <person name="Ferry-Dumazet H."/>
            <person name="Groppi A."/>
            <person name="Hantraye F."/>
            <person name="Hennequin C."/>
            <person name="Jauniaux N."/>
            <person name="Joyet P."/>
            <person name="Kachouri R."/>
            <person name="Kerrest A."/>
            <person name="Koszul R."/>
            <person name="Lemaire M."/>
            <person name="Lesur I."/>
            <person name="Ma L."/>
            <person name="Muller H."/>
            <person name="Nicaud J.-M."/>
            <person name="Nikolski M."/>
            <person name="Oztas S."/>
            <person name="Ozier-Kalogeropoulos O."/>
            <person name="Pellenz S."/>
            <person name="Potier S."/>
            <person name="Richard G.-F."/>
            <person name="Straub M.-L."/>
            <person name="Suleau A."/>
            <person name="Swennen D."/>
            <person name="Tekaia F."/>
            <person name="Wesolowski-Louvel M."/>
            <person name="Westhof E."/>
            <person name="Wirth B."/>
            <person name="Zeniou-Meyer M."/>
            <person name="Zivanovic Y."/>
            <person name="Bolotin-Fukuhara M."/>
            <person name="Thierry A."/>
            <person name="Bouchier C."/>
            <person name="Caudron B."/>
            <person name="Scarpelli C."/>
            <person name="Gaillardin C."/>
            <person name="Weissenbach J."/>
            <person name="Wincker P."/>
            <person name="Souciet J.-L."/>
        </authorList>
    </citation>
    <scope>NUCLEOTIDE SEQUENCE [LARGE SCALE GENOMIC DNA]</scope>
    <source>
        <strain>ATCC 8585 / CBS 2359 / DSM 70799 / NBRC 1267 / NRRL Y-1140 / WM37</strain>
    </source>
</reference>
<protein>
    <recommendedName>
        <fullName>Protein EFR3</fullName>
    </recommendedName>
</protein>
<gene>
    <name type="primary">EFR3</name>
    <name type="ordered locus">KLLA0C07326g</name>
</gene>
<evidence type="ECO:0000305" key="1"/>
<proteinExistence type="inferred from homology"/>
<keyword id="KW-1185">Reference proteome</keyword>